<dbReference type="EMBL" id="L22319">
    <property type="protein sequence ID" value="AAC37324.1"/>
    <property type="molecule type" value="mRNA"/>
</dbReference>
<dbReference type="PIR" id="I45896">
    <property type="entry name" value="I45896"/>
</dbReference>
<dbReference type="RefSeq" id="NP_776486.1">
    <property type="nucleotide sequence ID" value="NM_174061.1"/>
</dbReference>
<dbReference type="SMR" id="P35376"/>
<dbReference type="FunCoup" id="P35376">
    <property type="interactions" value="88"/>
</dbReference>
<dbReference type="STRING" id="9913.ENSBTAP00000048971"/>
<dbReference type="GlyCosmos" id="P35376">
    <property type="glycosylation" value="3 sites, No reported glycans"/>
</dbReference>
<dbReference type="GlyGen" id="P35376">
    <property type="glycosylation" value="3 sites"/>
</dbReference>
<dbReference type="PaxDb" id="9913-ENSBTAP00000048971"/>
<dbReference type="GeneID" id="281172"/>
<dbReference type="KEGG" id="bta:281172"/>
<dbReference type="CTD" id="2492"/>
<dbReference type="eggNOG" id="KOG2087">
    <property type="taxonomic scope" value="Eukaryota"/>
</dbReference>
<dbReference type="InParanoid" id="P35376"/>
<dbReference type="OrthoDB" id="5981530at2759"/>
<dbReference type="Proteomes" id="UP000009136">
    <property type="component" value="Unplaced"/>
</dbReference>
<dbReference type="GO" id="GO:0016020">
    <property type="term" value="C:membrane"/>
    <property type="evidence" value="ECO:0000250"/>
    <property type="project" value="UniProtKB"/>
</dbReference>
<dbReference type="GO" id="GO:0005886">
    <property type="term" value="C:plasma membrane"/>
    <property type="evidence" value="ECO:0000250"/>
    <property type="project" value="UniProtKB"/>
</dbReference>
<dbReference type="GO" id="GO:0043235">
    <property type="term" value="C:receptor complex"/>
    <property type="evidence" value="ECO:0000250"/>
    <property type="project" value="UniProtKB"/>
</dbReference>
<dbReference type="GO" id="GO:0004963">
    <property type="term" value="F:follicle-stimulating hormone receptor activity"/>
    <property type="evidence" value="ECO:0000250"/>
    <property type="project" value="UniProtKB"/>
</dbReference>
<dbReference type="GO" id="GO:0008528">
    <property type="term" value="F:G protein-coupled peptide receptor activity"/>
    <property type="evidence" value="ECO:0000318"/>
    <property type="project" value="GO_Central"/>
</dbReference>
<dbReference type="GO" id="GO:0007189">
    <property type="term" value="P:adenylate cyclase-activating G protein-coupled receptor signaling pathway"/>
    <property type="evidence" value="ECO:0000318"/>
    <property type="project" value="GO_Central"/>
</dbReference>
<dbReference type="GO" id="GO:0071372">
    <property type="term" value="P:cellular response to follicle-stimulating hormone stimulus"/>
    <property type="evidence" value="ECO:0000250"/>
    <property type="project" value="UniProtKB"/>
</dbReference>
<dbReference type="GO" id="GO:0042699">
    <property type="term" value="P:follicle-stimulating hormone signaling pathway"/>
    <property type="evidence" value="ECO:0000250"/>
    <property type="project" value="UniProtKB"/>
</dbReference>
<dbReference type="GO" id="GO:0007186">
    <property type="term" value="P:G protein-coupled receptor signaling pathway"/>
    <property type="evidence" value="ECO:0000250"/>
    <property type="project" value="UniProtKB"/>
</dbReference>
<dbReference type="GO" id="GO:0009755">
    <property type="term" value="P:hormone-mediated signaling pathway"/>
    <property type="evidence" value="ECO:0000318"/>
    <property type="project" value="GO_Central"/>
</dbReference>
<dbReference type="GO" id="GO:0008584">
    <property type="term" value="P:male gonad development"/>
    <property type="evidence" value="ECO:0000318"/>
    <property type="project" value="GO_Central"/>
</dbReference>
<dbReference type="GO" id="GO:0070374">
    <property type="term" value="P:positive regulation of ERK1 and ERK2 cascade"/>
    <property type="evidence" value="ECO:0000250"/>
    <property type="project" value="UniProtKB"/>
</dbReference>
<dbReference type="GO" id="GO:0051897">
    <property type="term" value="P:positive regulation of phosphatidylinositol 3-kinase/protein kinase B signal transduction"/>
    <property type="evidence" value="ECO:0000250"/>
    <property type="project" value="UniProtKB"/>
</dbReference>
<dbReference type="GO" id="GO:0010738">
    <property type="term" value="P:regulation of protein kinase A signaling"/>
    <property type="evidence" value="ECO:0000250"/>
    <property type="project" value="UniProtKB"/>
</dbReference>
<dbReference type="CDD" id="cd15360">
    <property type="entry name" value="7tmA_FSH-R"/>
    <property type="match status" value="1"/>
</dbReference>
<dbReference type="FunFam" id="1.20.1070.10:FF:000019">
    <property type="entry name" value="Lutropin-choriogonadotropic hormone receptor"/>
    <property type="match status" value="1"/>
</dbReference>
<dbReference type="Gene3D" id="1.20.1070.10">
    <property type="entry name" value="Rhodopsin 7-helix transmembrane proteins"/>
    <property type="match status" value="1"/>
</dbReference>
<dbReference type="Gene3D" id="3.80.10.10">
    <property type="entry name" value="Ribonuclease Inhibitor"/>
    <property type="match status" value="1"/>
</dbReference>
<dbReference type="InterPro" id="IPR002272">
    <property type="entry name" value="FSH_rcpt"/>
</dbReference>
<dbReference type="InterPro" id="IPR024635">
    <property type="entry name" value="GnHR_TM"/>
</dbReference>
<dbReference type="InterPro" id="IPR000276">
    <property type="entry name" value="GPCR_Rhodpsn"/>
</dbReference>
<dbReference type="InterPro" id="IPR017452">
    <property type="entry name" value="GPCR_Rhodpsn_7TM"/>
</dbReference>
<dbReference type="InterPro" id="IPR002131">
    <property type="entry name" value="Gphrmn_rcpt_fam"/>
</dbReference>
<dbReference type="InterPro" id="IPR026906">
    <property type="entry name" value="LRR_5"/>
</dbReference>
<dbReference type="InterPro" id="IPR032675">
    <property type="entry name" value="LRR_dom_sf"/>
</dbReference>
<dbReference type="InterPro" id="IPR000372">
    <property type="entry name" value="LRRNT"/>
</dbReference>
<dbReference type="PANTHER" id="PTHR24372:SF5">
    <property type="entry name" value="FOLLICLE-STIMULATING HORMONE RECEPTOR"/>
    <property type="match status" value="1"/>
</dbReference>
<dbReference type="PANTHER" id="PTHR24372">
    <property type="entry name" value="GLYCOPROTEIN HORMONE RECEPTOR"/>
    <property type="match status" value="1"/>
</dbReference>
<dbReference type="Pfam" id="PF00001">
    <property type="entry name" value="7tm_1"/>
    <property type="match status" value="1"/>
</dbReference>
<dbReference type="Pfam" id="PF12369">
    <property type="entry name" value="GnHR_trans"/>
    <property type="match status" value="1"/>
</dbReference>
<dbReference type="Pfam" id="PF13306">
    <property type="entry name" value="LRR_5"/>
    <property type="match status" value="2"/>
</dbReference>
<dbReference type="Pfam" id="PF01462">
    <property type="entry name" value="LRRNT"/>
    <property type="match status" value="1"/>
</dbReference>
<dbReference type="PRINTS" id="PR01143">
    <property type="entry name" value="FSHRECEPTOR"/>
</dbReference>
<dbReference type="PRINTS" id="PR00373">
    <property type="entry name" value="GLYCHORMONER"/>
</dbReference>
<dbReference type="PRINTS" id="PR00237">
    <property type="entry name" value="GPCRRHODOPSN"/>
</dbReference>
<dbReference type="SMART" id="SM00013">
    <property type="entry name" value="LRRNT"/>
    <property type="match status" value="1"/>
</dbReference>
<dbReference type="SUPFAM" id="SSF81321">
    <property type="entry name" value="Family A G protein-coupled receptor-like"/>
    <property type="match status" value="1"/>
</dbReference>
<dbReference type="SUPFAM" id="SSF52058">
    <property type="entry name" value="L domain-like"/>
    <property type="match status" value="1"/>
</dbReference>
<dbReference type="PROSITE" id="PS00237">
    <property type="entry name" value="G_PROTEIN_RECEP_F1_1"/>
    <property type="match status" value="1"/>
</dbReference>
<dbReference type="PROSITE" id="PS50262">
    <property type="entry name" value="G_PROTEIN_RECEP_F1_2"/>
    <property type="match status" value="1"/>
</dbReference>
<comment type="function">
    <text evidence="3">G protein-coupled receptor for follitropin, the follicle-stimulating hormone. Through cAMP production activates the downstream PI3K-AKT and ERK1/ERK2 signaling pathways.</text>
</comment>
<comment type="subunit">
    <text evidence="2 3">Homotrimer. Functions as a homotrimer binding the FSH hormone heterodimer composed of CGA and FSHB (By similarity). Interacts with ARRB2 (By similarity). Interacts with APPL2; interaction is independent of follicle stimulating hormone stimulation (By similarity).</text>
</comment>
<comment type="subcellular location">
    <subcellularLocation>
        <location evidence="3">Cell membrane</location>
        <topology evidence="3">Multi-pass membrane protein</topology>
    </subcellularLocation>
</comment>
<comment type="PTM">
    <text evidence="2">N-glycosylated; indirectly required for FSH-binding, possibly via a conformational change that allows high affinity binding of hormone.</text>
</comment>
<comment type="PTM">
    <text evidence="3">Sulfated.</text>
</comment>
<comment type="similarity">
    <text evidence="5">Belongs to the G-protein coupled receptor 1 family. FSH/LSH/TSH subfamily.</text>
</comment>
<sequence length="695" mass="78085">MALLLVALLAFLSLGSGCHHRLCHCSNGVFLCQESKVTEIPSDLPRDAVELRFVLTKLRVIPKGAFSGFGDLEKIEISQNDVLEVIEANVFSNLPKLHEIRIEKANNLLYIDPDAFQNLPNLRYLLISNTGIKHLPAVHKIQSLQKVLLDIQDNINIHTVERNSFMGLSFESMTVWLSKNGIQEIHNCAFNGTQLDELNLSDNSNLEELPNDVFQGASGPVILDISRTRIRSLPSYGLENLKKLRAKSTYRLKKLPSLEKFVTLVEASLTYPSHCCAFANWRRQTSDLHPICNKSILRQEVDDMTQARGQRVSLAEDDEPSYAKGFDVMYSEFDYDLCNEVVDVTCSPEPDAFNPCEDIMGDDILRVLIWFISILAITGNILVLVILITSQYKLTVPRFLMCNLAFADLCIGIYLLLIASVDVHTKTEYHNYAIDWQTGAGCDAAGFFTVFASELSVYTLTAITLERWHTITHAMQLECKVQLRHAASIMLVGWIFAFAVALFPIFGISSYMKVSICLPMDIDSPLSQLYVMSLLVLNVLAFVVICGCYTHIYLTVRNPNITSSSSDTKIAKRMAMLIFTDFLCMAPISFFAISASLKVPLITVSKSKILLVLFYPINSCANPFLYAIFTKNFRRDFFILLSKFGCYEVQAQTYRSETSSTAHNFHPRNGHCPPAPRVTNGSNYTLIPLRHLAKN</sequence>
<protein>
    <recommendedName>
        <fullName>Follicle-stimulating hormone receptor</fullName>
        <shortName>FSH-R</shortName>
    </recommendedName>
    <alternativeName>
        <fullName>Follitropin receptor</fullName>
    </alternativeName>
</protein>
<organism>
    <name type="scientific">Bos taurus</name>
    <name type="common">Bovine</name>
    <dbReference type="NCBI Taxonomy" id="9913"/>
    <lineage>
        <taxon>Eukaryota</taxon>
        <taxon>Metazoa</taxon>
        <taxon>Chordata</taxon>
        <taxon>Craniata</taxon>
        <taxon>Vertebrata</taxon>
        <taxon>Euteleostomi</taxon>
        <taxon>Mammalia</taxon>
        <taxon>Eutheria</taxon>
        <taxon>Laurasiatheria</taxon>
        <taxon>Artiodactyla</taxon>
        <taxon>Ruminantia</taxon>
        <taxon>Pecora</taxon>
        <taxon>Bovidae</taxon>
        <taxon>Bovinae</taxon>
        <taxon>Bos</taxon>
    </lineage>
</organism>
<reference key="1">
    <citation type="journal article" date="1994" name="Mol. Reprod. Dev.">
        <title>Structure of the bovine follicle-stimulating hormone receptor complementary DNA and expression in bovine tissues.</title>
        <authorList>
            <person name="Houde A."/>
            <person name="Lambert A."/>
            <person name="Saumande J."/>
            <person name="Silversides D.W."/>
            <person name="Lussier J.G."/>
        </authorList>
    </citation>
    <scope>NUCLEOTIDE SEQUENCE [MRNA]</scope>
    <source>
        <strain>Holstein</strain>
        <tissue>Ovary</tissue>
        <tissue>Testis</tissue>
    </source>
</reference>
<proteinExistence type="evidence at transcript level"/>
<keyword id="KW-1003">Cell membrane</keyword>
<keyword id="KW-1015">Disulfide bond</keyword>
<keyword id="KW-0297">G-protein coupled receptor</keyword>
<keyword id="KW-0325">Glycoprotein</keyword>
<keyword id="KW-0433">Leucine-rich repeat</keyword>
<keyword id="KW-0472">Membrane</keyword>
<keyword id="KW-0675">Receptor</keyword>
<keyword id="KW-1185">Reference proteome</keyword>
<keyword id="KW-0677">Repeat</keyword>
<keyword id="KW-0732">Signal</keyword>
<keyword id="KW-0765">Sulfation</keyword>
<keyword id="KW-0807">Transducer</keyword>
<keyword id="KW-0812">Transmembrane</keyword>
<keyword id="KW-1133">Transmembrane helix</keyword>
<name>FSHR_BOVIN</name>
<accession>P35376</accession>
<gene>
    <name type="primary">FSHR</name>
</gene>
<evidence type="ECO:0000250" key="1"/>
<evidence type="ECO:0000250" key="2">
    <source>
        <dbReference type="UniProtKB" id="P20395"/>
    </source>
</evidence>
<evidence type="ECO:0000250" key="3">
    <source>
        <dbReference type="UniProtKB" id="P23945"/>
    </source>
</evidence>
<evidence type="ECO:0000255" key="4"/>
<evidence type="ECO:0000255" key="5">
    <source>
        <dbReference type="PROSITE-ProRule" id="PRU00521"/>
    </source>
</evidence>
<feature type="signal peptide" evidence="4">
    <location>
        <begin position="1"/>
        <end position="17"/>
    </location>
</feature>
<feature type="chain" id="PRO_0000012768" description="Follicle-stimulating hormone receptor">
    <location>
        <begin position="18"/>
        <end position="695"/>
    </location>
</feature>
<feature type="topological domain" description="Extracellular" evidence="4">
    <location>
        <begin position="18"/>
        <end position="366"/>
    </location>
</feature>
<feature type="transmembrane region" description="Helical; Name=1" evidence="4">
    <location>
        <begin position="367"/>
        <end position="387"/>
    </location>
</feature>
<feature type="topological domain" description="Cytoplasmic" evidence="4">
    <location>
        <begin position="388"/>
        <end position="398"/>
    </location>
</feature>
<feature type="transmembrane region" description="Helical; Name=2" evidence="4">
    <location>
        <begin position="399"/>
        <end position="421"/>
    </location>
</feature>
<feature type="topological domain" description="Extracellular" evidence="4">
    <location>
        <begin position="422"/>
        <end position="443"/>
    </location>
</feature>
<feature type="transmembrane region" description="Helical; Name=3" evidence="4">
    <location>
        <begin position="444"/>
        <end position="465"/>
    </location>
</feature>
<feature type="topological domain" description="Cytoplasmic" evidence="4">
    <location>
        <begin position="466"/>
        <end position="485"/>
    </location>
</feature>
<feature type="transmembrane region" description="Helical; Name=4" evidence="4">
    <location>
        <begin position="486"/>
        <end position="508"/>
    </location>
</feature>
<feature type="topological domain" description="Extracellular" evidence="4">
    <location>
        <begin position="509"/>
        <end position="528"/>
    </location>
</feature>
<feature type="transmembrane region" description="Helical; Name=5" evidence="4">
    <location>
        <begin position="529"/>
        <end position="550"/>
    </location>
</feature>
<feature type="topological domain" description="Cytoplasmic" evidence="4">
    <location>
        <begin position="551"/>
        <end position="573"/>
    </location>
</feature>
<feature type="transmembrane region" description="Helical; Name=6" evidence="4">
    <location>
        <begin position="574"/>
        <end position="597"/>
    </location>
</feature>
<feature type="topological domain" description="Extracellular" evidence="4">
    <location>
        <begin position="598"/>
        <end position="608"/>
    </location>
</feature>
<feature type="transmembrane region" description="Helical; Name=7" evidence="4">
    <location>
        <begin position="609"/>
        <end position="630"/>
    </location>
</feature>
<feature type="topological domain" description="Cytoplasmic" evidence="4">
    <location>
        <begin position="631"/>
        <end position="695"/>
    </location>
</feature>
<feature type="domain" description="LRRNT">
    <location>
        <begin position="18"/>
        <end position="46"/>
    </location>
</feature>
<feature type="repeat" description="LRR 1">
    <location>
        <begin position="49"/>
        <end position="72"/>
    </location>
</feature>
<feature type="repeat" description="LRR 2">
    <location>
        <begin position="73"/>
        <end position="97"/>
    </location>
</feature>
<feature type="repeat" description="LRR 3">
    <location>
        <begin position="98"/>
        <end position="118"/>
    </location>
</feature>
<feature type="repeat" description="LRR 4">
    <location>
        <begin position="119"/>
        <end position="143"/>
    </location>
</feature>
<feature type="repeat" description="LRR 5">
    <location>
        <begin position="144"/>
        <end position="169"/>
    </location>
</feature>
<feature type="repeat" description="LRR 6">
    <location>
        <begin position="170"/>
        <end position="192"/>
    </location>
</feature>
<feature type="repeat" description="LRR 7">
    <location>
        <begin position="193"/>
        <end position="216"/>
    </location>
</feature>
<feature type="repeat" description="LRR 8">
    <location>
        <begin position="217"/>
        <end position="240"/>
    </location>
</feature>
<feature type="repeat" description="LRR 9">
    <location>
        <begin position="241"/>
        <end position="259"/>
    </location>
</feature>
<feature type="modified residue" description="Sulfotyrosine" evidence="3">
    <location>
        <position position="335"/>
    </location>
</feature>
<feature type="glycosylation site" description="N-linked (GlcNAc...) asparagine" evidence="1">
    <location>
        <position position="191"/>
    </location>
</feature>
<feature type="glycosylation site" description="N-linked (GlcNAc...) asparagine" evidence="4">
    <location>
        <position position="199"/>
    </location>
</feature>
<feature type="glycosylation site" description="N-linked (GlcNAc...) asparagine" evidence="1">
    <location>
        <position position="293"/>
    </location>
</feature>
<feature type="disulfide bond" evidence="5">
    <location>
        <begin position="18"/>
        <end position="25"/>
    </location>
</feature>
<feature type="disulfide bond" evidence="5">
    <location>
        <begin position="23"/>
        <end position="32"/>
    </location>
</feature>
<feature type="disulfide bond" evidence="3">
    <location>
        <begin position="275"/>
        <end position="346"/>
    </location>
</feature>
<feature type="disulfide bond" evidence="3">
    <location>
        <begin position="276"/>
        <end position="356"/>
    </location>
</feature>
<feature type="disulfide bond" evidence="3">
    <location>
        <begin position="276"/>
        <end position="292"/>
    </location>
</feature>
<feature type="disulfide bond" evidence="3">
    <location>
        <begin position="292"/>
        <end position="338"/>
    </location>
</feature>
<feature type="disulfide bond" evidence="5">
    <location>
        <begin position="442"/>
        <end position="517"/>
    </location>
</feature>